<gene>
    <name type="primary">YCH1</name>
    <name type="ordered locus">YGR203W</name>
    <name type="ORF">G7731</name>
</gene>
<protein>
    <recommendedName>
        <fullName>CDC25-like phosphatase YCH1</fullName>
        <ecNumber>3.1.3.-</ecNumber>
    </recommendedName>
    <alternativeName>
        <fullName>CDC25 homolog 1</fullName>
    </alternativeName>
</protein>
<comment type="function">
    <text evidence="4">Protein phosphatase.</text>
</comment>
<comment type="biophysicochemical properties">
    <kinetics>
        <KM evidence="4">3.5 mM for p-nitrophenylphosphate (PNPP)</KM>
    </kinetics>
    <phDependence>
        <text evidence="4">Optimum pH is 7.5.</text>
    </phDependence>
</comment>
<comment type="subcellular location">
    <subcellularLocation>
        <location evidence="2">Cytoplasm</location>
    </subcellularLocation>
    <subcellularLocation>
        <location evidence="2">Nucleus</location>
    </subcellularLocation>
</comment>
<comment type="miscellaneous">
    <text evidence="3">Present with 2310 molecules/cell in log phase SD medium.</text>
</comment>
<comment type="similarity">
    <text evidence="5">Belongs to the MPI phosphatase family.</text>
</comment>
<feature type="chain" id="PRO_0000202844" description="CDC25-like phosphatase YCH1">
    <location>
        <begin position="1"/>
        <end position="148"/>
    </location>
</feature>
<feature type="domain" description="Rhodanese" evidence="1">
    <location>
        <begin position="29"/>
        <end position="137"/>
    </location>
</feature>
<feature type="modified residue" description="N-acetylmethionine" evidence="6">
    <location>
        <position position="1"/>
    </location>
</feature>
<feature type="strand" evidence="8">
    <location>
        <begin position="3"/>
        <end position="5"/>
    </location>
</feature>
<feature type="strand" evidence="7">
    <location>
        <begin position="8"/>
        <end position="12"/>
    </location>
</feature>
<feature type="helix" evidence="7">
    <location>
        <begin position="14"/>
        <end position="23"/>
    </location>
</feature>
<feature type="turn" evidence="7">
    <location>
        <begin position="27"/>
        <end position="29"/>
    </location>
</feature>
<feature type="strand" evidence="7">
    <location>
        <begin position="33"/>
        <end position="37"/>
    </location>
</feature>
<feature type="helix" evidence="8">
    <location>
        <begin position="41"/>
        <end position="43"/>
    </location>
</feature>
<feature type="helix" evidence="7">
    <location>
        <begin position="56"/>
        <end position="61"/>
    </location>
</feature>
<feature type="helix" evidence="7">
    <location>
        <begin position="63"/>
        <end position="78"/>
    </location>
</feature>
<feature type="strand" evidence="7">
    <location>
        <begin position="80"/>
        <end position="82"/>
    </location>
</feature>
<feature type="strand" evidence="7">
    <location>
        <begin position="84"/>
        <end position="89"/>
    </location>
</feature>
<feature type="strand" evidence="7">
    <location>
        <begin position="91"/>
        <end position="95"/>
    </location>
</feature>
<feature type="helix" evidence="7">
    <location>
        <begin position="96"/>
        <end position="106"/>
    </location>
</feature>
<feature type="helix" evidence="7">
    <location>
        <begin position="110"/>
        <end position="113"/>
    </location>
</feature>
<feature type="strand" evidence="7">
    <location>
        <begin position="116"/>
        <end position="121"/>
    </location>
</feature>
<feature type="helix" evidence="7">
    <location>
        <begin position="124"/>
        <end position="132"/>
    </location>
</feature>
<feature type="turn" evidence="7">
    <location>
        <begin position="136"/>
        <end position="138"/>
    </location>
</feature>
<feature type="strand" evidence="7">
    <location>
        <begin position="139"/>
        <end position="141"/>
    </location>
</feature>
<feature type="helix" evidence="7">
    <location>
        <begin position="144"/>
        <end position="147"/>
    </location>
</feature>
<evidence type="ECO:0000255" key="1">
    <source>
        <dbReference type="PROSITE-ProRule" id="PRU00173"/>
    </source>
</evidence>
<evidence type="ECO:0000269" key="2">
    <source>
    </source>
</evidence>
<evidence type="ECO:0000269" key="3">
    <source>
    </source>
</evidence>
<evidence type="ECO:0000269" key="4">
    <source>
    </source>
</evidence>
<evidence type="ECO:0000305" key="5"/>
<evidence type="ECO:0007744" key="6">
    <source>
    </source>
</evidence>
<evidence type="ECO:0007829" key="7">
    <source>
        <dbReference type="PDB" id="3F4A"/>
    </source>
</evidence>
<evidence type="ECO:0007829" key="8">
    <source>
        <dbReference type="PDB" id="3FS5"/>
    </source>
</evidence>
<name>YCH1_YEAST</name>
<proteinExistence type="evidence at protein level"/>
<keyword id="KW-0002">3D-structure</keyword>
<keyword id="KW-0007">Acetylation</keyword>
<keyword id="KW-0963">Cytoplasm</keyword>
<keyword id="KW-0378">Hydrolase</keyword>
<keyword id="KW-0539">Nucleus</keyword>
<keyword id="KW-0904">Protein phosphatase</keyword>
<keyword id="KW-1185">Reference proteome</keyword>
<sequence length="148" mass="17249">MDSYSITNVKYLDPTELHRWMQEGHTTTLREPFQVVDVRGSDYMGGHIKDGWHYAYSRLKQDPEYLRELKHRLLEKQADGRGALNVIFHCMLSQQRGPSAAMLLLRSLDTAELSRCRLWVLRGGFSRWQSVYGDDESVTAGYLPDLWR</sequence>
<dbReference type="EC" id="3.1.3.-"/>
<dbReference type="EMBL" id="Z49133">
    <property type="protein sequence ID" value="CAA88996.1"/>
    <property type="molecule type" value="Genomic_DNA"/>
</dbReference>
<dbReference type="EMBL" id="Z72988">
    <property type="protein sequence ID" value="CAA97230.1"/>
    <property type="molecule type" value="Genomic_DNA"/>
</dbReference>
<dbReference type="EMBL" id="AY558510">
    <property type="protein sequence ID" value="AAS56836.1"/>
    <property type="molecule type" value="Genomic_DNA"/>
</dbReference>
<dbReference type="EMBL" id="BK006941">
    <property type="protein sequence ID" value="DAA08296.1"/>
    <property type="molecule type" value="Genomic_DNA"/>
</dbReference>
<dbReference type="PIR" id="S53926">
    <property type="entry name" value="S53926"/>
</dbReference>
<dbReference type="RefSeq" id="NP_011719.1">
    <property type="nucleotide sequence ID" value="NM_001181332.1"/>
</dbReference>
<dbReference type="PDB" id="3F4A">
    <property type="method" value="X-ray"/>
    <property type="resolution" value="1.80 A"/>
    <property type="chains" value="A/B=1-148"/>
</dbReference>
<dbReference type="PDB" id="3FS5">
    <property type="method" value="X-ray"/>
    <property type="resolution" value="1.90 A"/>
    <property type="chains" value="A=1-148"/>
</dbReference>
<dbReference type="PDBsum" id="3F4A"/>
<dbReference type="PDBsum" id="3FS5"/>
<dbReference type="SMR" id="P42937"/>
<dbReference type="BioGRID" id="33456">
    <property type="interactions" value="182"/>
</dbReference>
<dbReference type="DIP" id="DIP-885N"/>
<dbReference type="FunCoup" id="P42937">
    <property type="interactions" value="265"/>
</dbReference>
<dbReference type="IntAct" id="P42937">
    <property type="interactions" value="9"/>
</dbReference>
<dbReference type="MINT" id="P42937"/>
<dbReference type="STRING" id="4932.YGR203W"/>
<dbReference type="iPTMnet" id="P42937"/>
<dbReference type="PaxDb" id="4932-YGR203W"/>
<dbReference type="PeptideAtlas" id="P42937"/>
<dbReference type="DNASU" id="853117"/>
<dbReference type="EnsemblFungi" id="YGR203W_mRNA">
    <property type="protein sequence ID" value="YGR203W"/>
    <property type="gene ID" value="YGR203W"/>
</dbReference>
<dbReference type="GeneID" id="853117"/>
<dbReference type="KEGG" id="sce:YGR203W"/>
<dbReference type="AGR" id="SGD:S000003435"/>
<dbReference type="SGD" id="S000003435">
    <property type="gene designation" value="YCH1"/>
</dbReference>
<dbReference type="VEuPathDB" id="FungiDB:YGR203W"/>
<dbReference type="eggNOG" id="KOG3772">
    <property type="taxonomic scope" value="Eukaryota"/>
</dbReference>
<dbReference type="GeneTree" id="ENSGT00940000176483"/>
<dbReference type="HOGENOM" id="CLU_107716_1_0_1"/>
<dbReference type="InParanoid" id="P42937"/>
<dbReference type="OMA" id="RCTNIPC"/>
<dbReference type="OrthoDB" id="102559at2759"/>
<dbReference type="BioCyc" id="YEAST:G3O-30887-MONOMER"/>
<dbReference type="BioGRID-ORCS" id="853117">
    <property type="hits" value="0 hits in 10 CRISPR screens"/>
</dbReference>
<dbReference type="EvolutionaryTrace" id="P42937"/>
<dbReference type="PRO" id="PR:P42937"/>
<dbReference type="Proteomes" id="UP000002311">
    <property type="component" value="Chromosome VII"/>
</dbReference>
<dbReference type="RNAct" id="P42937">
    <property type="molecule type" value="protein"/>
</dbReference>
<dbReference type="GO" id="GO:0005737">
    <property type="term" value="C:cytoplasm"/>
    <property type="evidence" value="ECO:0007005"/>
    <property type="project" value="SGD"/>
</dbReference>
<dbReference type="GO" id="GO:0005634">
    <property type="term" value="C:nucleus"/>
    <property type="evidence" value="ECO:0007005"/>
    <property type="project" value="SGD"/>
</dbReference>
<dbReference type="GO" id="GO:0016791">
    <property type="term" value="F:phosphatase activity"/>
    <property type="evidence" value="ECO:0000314"/>
    <property type="project" value="SGD"/>
</dbReference>
<dbReference type="GO" id="GO:0004725">
    <property type="term" value="F:protein tyrosine phosphatase activity"/>
    <property type="evidence" value="ECO:0000318"/>
    <property type="project" value="GO_Central"/>
</dbReference>
<dbReference type="GO" id="GO:0004792">
    <property type="term" value="F:thiosulfate-cyanide sulfurtransferase activity"/>
    <property type="evidence" value="ECO:0000314"/>
    <property type="project" value="SGD"/>
</dbReference>
<dbReference type="CDD" id="cd01531">
    <property type="entry name" value="Acr2p"/>
    <property type="match status" value="1"/>
</dbReference>
<dbReference type="FunFam" id="3.40.250.10:FF:000073">
    <property type="entry name" value="YCH1p Phosphatase"/>
    <property type="match status" value="1"/>
</dbReference>
<dbReference type="Gene3D" id="3.40.250.10">
    <property type="entry name" value="Rhodanese-like domain"/>
    <property type="match status" value="1"/>
</dbReference>
<dbReference type="InterPro" id="IPR001763">
    <property type="entry name" value="Rhodanese-like_dom"/>
</dbReference>
<dbReference type="InterPro" id="IPR036873">
    <property type="entry name" value="Rhodanese-like_dom_sf"/>
</dbReference>
<dbReference type="PANTHER" id="PTHR10828:SF38">
    <property type="entry name" value="ARSENICAL-RESISTANCE PROTEIN 2-RELATED"/>
    <property type="match status" value="1"/>
</dbReference>
<dbReference type="PANTHER" id="PTHR10828">
    <property type="entry name" value="M-PHASE INDUCER PHOSPHATASE DUAL SPECIFICITY PHOSPHATASE CDC25"/>
    <property type="match status" value="1"/>
</dbReference>
<dbReference type="Pfam" id="PF00581">
    <property type="entry name" value="Rhodanese"/>
    <property type="match status" value="1"/>
</dbReference>
<dbReference type="SMART" id="SM00450">
    <property type="entry name" value="RHOD"/>
    <property type="match status" value="1"/>
</dbReference>
<dbReference type="SUPFAM" id="SSF52821">
    <property type="entry name" value="Rhodanese/Cell cycle control phosphatase"/>
    <property type="match status" value="1"/>
</dbReference>
<dbReference type="PROSITE" id="PS50206">
    <property type="entry name" value="RHODANESE_3"/>
    <property type="match status" value="1"/>
</dbReference>
<organism>
    <name type="scientific">Saccharomyces cerevisiae (strain ATCC 204508 / S288c)</name>
    <name type="common">Baker's yeast</name>
    <dbReference type="NCBI Taxonomy" id="559292"/>
    <lineage>
        <taxon>Eukaryota</taxon>
        <taxon>Fungi</taxon>
        <taxon>Dikarya</taxon>
        <taxon>Ascomycota</taxon>
        <taxon>Saccharomycotina</taxon>
        <taxon>Saccharomycetes</taxon>
        <taxon>Saccharomycetales</taxon>
        <taxon>Saccharomycetaceae</taxon>
        <taxon>Saccharomyces</taxon>
    </lineage>
</organism>
<reference key="1">
    <citation type="journal article" date="1996" name="Yeast">
        <title>Sequencing of a 17.6 kb segment on the right arm of yeast chromosome VII reveals 12 ORFs, including CCT, ADE3 and TR-I genes, homologues of the yeast PMT and EF1G genes, of the human and bacterial electron-transferring flavoproteins (beta-chain) and of the Escherichia coli phosphoserine phosphohydrolase, and five new ORFs.</title>
        <authorList>
            <person name="Guerreiro P."/>
            <person name="Barreiros T."/>
            <person name="Soares H."/>
            <person name="Cyrne L."/>
            <person name="Maia e Silva A."/>
            <person name="Rodrigues-Pousada C."/>
        </authorList>
    </citation>
    <scope>NUCLEOTIDE SEQUENCE [GENOMIC DNA]</scope>
    <source>
        <strain>ATCC 204508 / S288c</strain>
    </source>
</reference>
<reference key="2">
    <citation type="journal article" date="1997" name="Nature">
        <title>The nucleotide sequence of Saccharomyces cerevisiae chromosome VII.</title>
        <authorList>
            <person name="Tettelin H."/>
            <person name="Agostoni-Carbone M.L."/>
            <person name="Albermann K."/>
            <person name="Albers M."/>
            <person name="Arroyo J."/>
            <person name="Backes U."/>
            <person name="Barreiros T."/>
            <person name="Bertani I."/>
            <person name="Bjourson A.J."/>
            <person name="Brueckner M."/>
            <person name="Bruschi C.V."/>
            <person name="Carignani G."/>
            <person name="Castagnoli L."/>
            <person name="Cerdan E."/>
            <person name="Clemente M.L."/>
            <person name="Coblenz A."/>
            <person name="Coglievina M."/>
            <person name="Coissac E."/>
            <person name="Defoor E."/>
            <person name="Del Bino S."/>
            <person name="Delius H."/>
            <person name="Delneri D."/>
            <person name="de Wergifosse P."/>
            <person name="Dujon B."/>
            <person name="Durand P."/>
            <person name="Entian K.-D."/>
            <person name="Eraso P."/>
            <person name="Escribano V."/>
            <person name="Fabiani L."/>
            <person name="Fartmann B."/>
            <person name="Feroli F."/>
            <person name="Feuermann M."/>
            <person name="Frontali L."/>
            <person name="Garcia-Gonzalez M."/>
            <person name="Garcia-Saez M.I."/>
            <person name="Goffeau A."/>
            <person name="Guerreiro P."/>
            <person name="Hani J."/>
            <person name="Hansen M."/>
            <person name="Hebling U."/>
            <person name="Hernandez K."/>
            <person name="Heumann K."/>
            <person name="Hilger F."/>
            <person name="Hofmann B."/>
            <person name="Indge K.J."/>
            <person name="James C.M."/>
            <person name="Klima R."/>
            <person name="Koetter P."/>
            <person name="Kramer B."/>
            <person name="Kramer W."/>
            <person name="Lauquin G."/>
            <person name="Leuther H."/>
            <person name="Louis E.J."/>
            <person name="Maillier E."/>
            <person name="Marconi A."/>
            <person name="Martegani E."/>
            <person name="Mazon M.J."/>
            <person name="Mazzoni C."/>
            <person name="McReynolds A.D.K."/>
            <person name="Melchioretto P."/>
            <person name="Mewes H.-W."/>
            <person name="Minenkova O."/>
            <person name="Mueller-Auer S."/>
            <person name="Nawrocki A."/>
            <person name="Netter P."/>
            <person name="Neu R."/>
            <person name="Nombela C."/>
            <person name="Oliver S.G."/>
            <person name="Panzeri L."/>
            <person name="Paoluzi S."/>
            <person name="Plevani P."/>
            <person name="Portetelle D."/>
            <person name="Portillo F."/>
            <person name="Potier S."/>
            <person name="Purnelle B."/>
            <person name="Rieger M."/>
            <person name="Riles L."/>
            <person name="Rinaldi T."/>
            <person name="Robben J."/>
            <person name="Rodrigues-Pousada C."/>
            <person name="Rodriguez-Belmonte E."/>
            <person name="Rodriguez-Torres A.M."/>
            <person name="Rose M."/>
            <person name="Ruzzi M."/>
            <person name="Saliola M."/>
            <person name="Sanchez-Perez M."/>
            <person name="Schaefer B."/>
            <person name="Schaefer M."/>
            <person name="Scharfe M."/>
            <person name="Schmidheini T."/>
            <person name="Schreer A."/>
            <person name="Skala J."/>
            <person name="Souciet J.-L."/>
            <person name="Steensma H.Y."/>
            <person name="Talla E."/>
            <person name="Thierry A."/>
            <person name="Vandenbol M."/>
            <person name="van der Aart Q.J.M."/>
            <person name="Van Dyck L."/>
            <person name="Vanoni M."/>
            <person name="Verhasselt P."/>
            <person name="Voet M."/>
            <person name="Volckaert G."/>
            <person name="Wambutt R."/>
            <person name="Watson M.D."/>
            <person name="Weber N."/>
            <person name="Wedler E."/>
            <person name="Wedler H."/>
            <person name="Wipfli P."/>
            <person name="Wolf K."/>
            <person name="Wright L.F."/>
            <person name="Zaccaria P."/>
            <person name="Zimmermann M."/>
            <person name="Zollner A."/>
            <person name="Kleine K."/>
        </authorList>
    </citation>
    <scope>NUCLEOTIDE SEQUENCE [LARGE SCALE GENOMIC DNA]</scope>
    <source>
        <strain>ATCC 204508 / S288c</strain>
    </source>
</reference>
<reference key="3">
    <citation type="journal article" date="2014" name="G3 (Bethesda)">
        <title>The reference genome sequence of Saccharomyces cerevisiae: Then and now.</title>
        <authorList>
            <person name="Engel S.R."/>
            <person name="Dietrich F.S."/>
            <person name="Fisk D.G."/>
            <person name="Binkley G."/>
            <person name="Balakrishnan R."/>
            <person name="Costanzo M.C."/>
            <person name="Dwight S.S."/>
            <person name="Hitz B.C."/>
            <person name="Karra K."/>
            <person name="Nash R.S."/>
            <person name="Weng S."/>
            <person name="Wong E.D."/>
            <person name="Lloyd P."/>
            <person name="Skrzypek M.S."/>
            <person name="Miyasato S.R."/>
            <person name="Simison M."/>
            <person name="Cherry J.M."/>
        </authorList>
    </citation>
    <scope>GENOME REANNOTATION</scope>
    <source>
        <strain>ATCC 204508 / S288c</strain>
    </source>
</reference>
<reference key="4">
    <citation type="journal article" date="2007" name="Genome Res.">
        <title>Approaching a complete repository of sequence-verified protein-encoding clones for Saccharomyces cerevisiae.</title>
        <authorList>
            <person name="Hu Y."/>
            <person name="Rolfs A."/>
            <person name="Bhullar B."/>
            <person name="Murthy T.V.S."/>
            <person name="Zhu C."/>
            <person name="Berger M.F."/>
            <person name="Camargo A.A."/>
            <person name="Kelley F."/>
            <person name="McCarron S."/>
            <person name="Jepson D."/>
            <person name="Richardson A."/>
            <person name="Raphael J."/>
            <person name="Moreira D."/>
            <person name="Taycher E."/>
            <person name="Zuo D."/>
            <person name="Mohr S."/>
            <person name="Kane M.F."/>
            <person name="Williamson J."/>
            <person name="Simpson A.J.G."/>
            <person name="Bulyk M.L."/>
            <person name="Harlow E."/>
            <person name="Marsischky G."/>
            <person name="Kolodner R.D."/>
            <person name="LaBaer J."/>
        </authorList>
    </citation>
    <scope>NUCLEOTIDE SEQUENCE [GENOMIC DNA]</scope>
    <source>
        <strain>ATCC 204508 / S288c</strain>
    </source>
</reference>
<reference key="5">
    <citation type="journal article" date="1998" name="J. Mol. Biol.">
        <title>A model of Cdc25 phosphatase catalytic domain and Cdk-interaction surface based on the presence of a rhodanese homology domain.</title>
        <authorList>
            <person name="Hofmann K."/>
            <person name="Bucher P."/>
            <person name="Kajava A.V."/>
        </authorList>
    </citation>
    <scope>DOMAIN</scope>
</reference>
<reference key="6">
    <citation type="journal article" date="2003" name="Nature">
        <title>Global analysis of protein localization in budding yeast.</title>
        <authorList>
            <person name="Huh W.-K."/>
            <person name="Falvo J.V."/>
            <person name="Gerke L.C."/>
            <person name="Carroll A.S."/>
            <person name="Howson R.W."/>
            <person name="Weissman J.S."/>
            <person name="O'Shea E.K."/>
        </authorList>
    </citation>
    <scope>SUBCELLULAR LOCATION [LARGE SCALE ANALYSIS]</scope>
</reference>
<reference key="7">
    <citation type="journal article" date="2003" name="Nature">
        <title>Global analysis of protein expression in yeast.</title>
        <authorList>
            <person name="Ghaemmaghami S."/>
            <person name="Huh W.-K."/>
            <person name="Bower K."/>
            <person name="Howson R.W."/>
            <person name="Belle A."/>
            <person name="Dephoure N."/>
            <person name="O'Shea E.K."/>
            <person name="Weissman J.S."/>
        </authorList>
    </citation>
    <scope>LEVEL OF PROTEIN EXPRESSION [LARGE SCALE ANALYSIS]</scope>
</reference>
<reference key="8">
    <citation type="journal article" date="2012" name="Proc. Natl. Acad. Sci. U.S.A.">
        <title>N-terminal acetylome analyses and functional insights of the N-terminal acetyltransferase NatB.</title>
        <authorList>
            <person name="Van Damme P."/>
            <person name="Lasa M."/>
            <person name="Polevoda B."/>
            <person name="Gazquez C."/>
            <person name="Elosegui-Artola A."/>
            <person name="Kim D.S."/>
            <person name="De Juan-Pardo E."/>
            <person name="Demeyer K."/>
            <person name="Hole K."/>
            <person name="Larrea E."/>
            <person name="Timmerman E."/>
            <person name="Prieto J."/>
            <person name="Arnesen T."/>
            <person name="Sherman F."/>
            <person name="Gevaert K."/>
            <person name="Aldabe R."/>
        </authorList>
    </citation>
    <scope>ACETYLATION [LARGE SCALE ANALYSIS] AT MET-1</scope>
    <scope>IDENTIFICATION BY MASS SPECTROMETRY [LARGE SCALE ANALYSIS]</scope>
</reference>
<reference key="9">
    <citation type="journal article" date="2000" name="Acta Crystallogr. D">
        <title>Crystallization and preliminary X-ray diffraction analysis of Saccharomyces cerevisiae Ygr203p, a homologue of Acr2 arsenate reductase.</title>
        <authorList>
            <person name="Moon J."/>
            <person name="Kim Y.S."/>
            <person name="Lee J.Y."/>
            <person name="Cho S.J."/>
            <person name="Song H.K."/>
            <person name="Cho J.H."/>
            <person name="Kim B.M."/>
            <person name="Kim K.K."/>
            <person name="Suh S.W."/>
        </authorList>
    </citation>
    <scope>X-RAY CRYSTALLOGRAPHY (1.9 ANGSTROMS)</scope>
</reference>
<reference key="10">
    <citation type="journal article" date="2009" name="Proteins">
        <title>Crystal structure of Saccharomyces cerevisiae Ygr203w, a homolog of single-domain rhodanese and Cdc25 phosphatase catalytic domain.</title>
        <authorList>
            <person name="Yeo H.K."/>
            <person name="Lee J.Y."/>
        </authorList>
    </citation>
    <scope>X-RAY CRYSTALLOGRAPHY (1.9 ANGSTROMS)</scope>
    <scope>FUNCTION</scope>
    <scope>BIOPHYSICOCHEMICAL PROPERTIES</scope>
</reference>
<accession>P42937</accession>
<accession>D6VUY5</accession>